<gene>
    <name type="ORF">DDB_G0274527</name>
</gene>
<accession>Q869Q0</accession>
<accession>Q555J0</accession>
<keyword id="KW-0143">Chaperone</keyword>
<keyword id="KW-0175">Coiled coil</keyword>
<keyword id="KW-0342">GTP-binding</keyword>
<keyword id="KW-0378">Hydrolase</keyword>
<keyword id="KW-0479">Metal-binding</keyword>
<keyword id="KW-0547">Nucleotide-binding</keyword>
<keyword id="KW-1185">Reference proteome</keyword>
<keyword id="KW-0862">Zinc</keyword>
<name>ZNG1_DICDI</name>
<comment type="function">
    <text evidence="1">Zinc chaperone that directly transfers zinc cofactor to target metalloproteins, thereby activating them. Zinc is transferred from the CXCC motif in the GTPase domain to the zinc binding site in target proteins in a process requiring GTP hydrolysis.</text>
</comment>
<comment type="catalytic activity">
    <reaction evidence="1">
        <text>GTP + H2O = GDP + phosphate + H(+)</text>
        <dbReference type="Rhea" id="RHEA:19669"/>
        <dbReference type="ChEBI" id="CHEBI:15377"/>
        <dbReference type="ChEBI" id="CHEBI:15378"/>
        <dbReference type="ChEBI" id="CHEBI:37565"/>
        <dbReference type="ChEBI" id="CHEBI:43474"/>
        <dbReference type="ChEBI" id="CHEBI:58189"/>
    </reaction>
    <physiologicalReaction direction="left-to-right" evidence="1">
        <dbReference type="Rhea" id="RHEA:19670"/>
    </physiologicalReaction>
</comment>
<comment type="similarity">
    <text evidence="4">Belongs to the SIMIBI class G3E GTPase family. ZNG1 subfamily.</text>
</comment>
<feature type="chain" id="PRO_0000367827" description="Zinc-regulated GTPase metalloprotein activator 1">
    <location>
        <begin position="1"/>
        <end position="475"/>
    </location>
</feature>
<feature type="domain" description="CobW C-terminal">
    <location>
        <begin position="302"/>
        <end position="420"/>
    </location>
</feature>
<feature type="region of interest" description="Disordered" evidence="3">
    <location>
        <begin position="445"/>
        <end position="475"/>
    </location>
</feature>
<feature type="coiled-coil region" evidence="2">
    <location>
        <begin position="440"/>
        <end position="467"/>
    </location>
</feature>
<feature type="short sequence motif" description="CXCC motif" evidence="2">
    <location>
        <begin position="116"/>
        <end position="119"/>
    </location>
</feature>
<feature type="compositionally biased region" description="Acidic residues" evidence="3">
    <location>
        <begin position="445"/>
        <end position="460"/>
    </location>
</feature>
<feature type="compositionally biased region" description="Basic and acidic residues" evidence="3">
    <location>
        <begin position="461"/>
        <end position="475"/>
    </location>
</feature>
<feature type="binding site" evidence="2">
    <location>
        <begin position="50"/>
        <end position="57"/>
    </location>
    <ligand>
        <name>GTP</name>
        <dbReference type="ChEBI" id="CHEBI:37565"/>
    </ligand>
</feature>
<feature type="binding site" evidence="1">
    <location>
        <position position="116"/>
    </location>
    <ligand>
        <name>Zn(2+)</name>
        <dbReference type="ChEBI" id="CHEBI:29105"/>
    </ligand>
</feature>
<feature type="binding site" evidence="1">
    <location>
        <position position="118"/>
    </location>
    <ligand>
        <name>Zn(2+)</name>
        <dbReference type="ChEBI" id="CHEBI:29105"/>
    </ligand>
</feature>
<feature type="binding site" evidence="2">
    <location>
        <begin position="119"/>
        <end position="123"/>
    </location>
    <ligand>
        <name>GTP</name>
        <dbReference type="ChEBI" id="CHEBI:37565"/>
    </ligand>
</feature>
<feature type="binding site" evidence="1">
    <location>
        <position position="119"/>
    </location>
    <ligand>
        <name>Zn(2+)</name>
        <dbReference type="ChEBI" id="CHEBI:29105"/>
    </ligand>
</feature>
<feature type="binding site" evidence="2">
    <location>
        <begin position="229"/>
        <end position="232"/>
    </location>
    <ligand>
        <name>GTP</name>
        <dbReference type="ChEBI" id="CHEBI:37565"/>
    </ligand>
</feature>
<dbReference type="EC" id="3.6.5.-" evidence="1"/>
<dbReference type="EMBL" id="AAFI02000012">
    <property type="protein sequence ID" value="EAL70156.1"/>
    <property type="molecule type" value="Genomic_DNA"/>
</dbReference>
<dbReference type="RefSeq" id="XP_644077.1">
    <property type="nucleotide sequence ID" value="XM_638985.1"/>
</dbReference>
<dbReference type="SMR" id="Q869Q0"/>
<dbReference type="STRING" id="44689.Q869Q0"/>
<dbReference type="PaxDb" id="44689-DDB0238044"/>
<dbReference type="EnsemblProtists" id="EAL70156">
    <property type="protein sequence ID" value="EAL70156"/>
    <property type="gene ID" value="DDB_G0274527"/>
</dbReference>
<dbReference type="GeneID" id="8619506"/>
<dbReference type="KEGG" id="ddi:DDB_G0274527"/>
<dbReference type="dictyBase" id="DDB_G0274527"/>
<dbReference type="VEuPathDB" id="AmoebaDB:DDB_G0274527"/>
<dbReference type="eggNOG" id="KOG2743">
    <property type="taxonomic scope" value="Eukaryota"/>
</dbReference>
<dbReference type="HOGENOM" id="CLU_017452_2_0_1"/>
<dbReference type="InParanoid" id="Q869Q0"/>
<dbReference type="OMA" id="WSQAGPN"/>
<dbReference type="PhylomeDB" id="Q869Q0"/>
<dbReference type="PRO" id="PR:Q869Q0"/>
<dbReference type="Proteomes" id="UP000002195">
    <property type="component" value="Chromosome 2"/>
</dbReference>
<dbReference type="GO" id="GO:0005525">
    <property type="term" value="F:GTP binding"/>
    <property type="evidence" value="ECO:0007669"/>
    <property type="project" value="UniProtKB-KW"/>
</dbReference>
<dbReference type="GO" id="GO:0016787">
    <property type="term" value="F:hydrolase activity"/>
    <property type="evidence" value="ECO:0007669"/>
    <property type="project" value="UniProtKB-KW"/>
</dbReference>
<dbReference type="GO" id="GO:0046872">
    <property type="term" value="F:metal ion binding"/>
    <property type="evidence" value="ECO:0007669"/>
    <property type="project" value="UniProtKB-KW"/>
</dbReference>
<dbReference type="CDD" id="cd03112">
    <property type="entry name" value="CobW-like"/>
    <property type="match status" value="1"/>
</dbReference>
<dbReference type="Gene3D" id="3.30.1220.10">
    <property type="entry name" value="CobW-like, C-terminal domain"/>
    <property type="match status" value="1"/>
</dbReference>
<dbReference type="Gene3D" id="3.40.50.300">
    <property type="entry name" value="P-loop containing nucleotide triphosphate hydrolases"/>
    <property type="match status" value="1"/>
</dbReference>
<dbReference type="InterPro" id="IPR036627">
    <property type="entry name" value="CobW-likC_sf"/>
</dbReference>
<dbReference type="InterPro" id="IPR011629">
    <property type="entry name" value="CobW-like_C"/>
</dbReference>
<dbReference type="InterPro" id="IPR003495">
    <property type="entry name" value="CobW/HypB/UreG_nucleotide-bd"/>
</dbReference>
<dbReference type="InterPro" id="IPR027417">
    <property type="entry name" value="P-loop_NTPase"/>
</dbReference>
<dbReference type="InterPro" id="IPR051927">
    <property type="entry name" value="Zn_Chap_cDPG_Synth"/>
</dbReference>
<dbReference type="PANTHER" id="PTHR43603">
    <property type="entry name" value="COBW DOMAIN-CONTAINING PROTEIN DDB_G0274527"/>
    <property type="match status" value="1"/>
</dbReference>
<dbReference type="PANTHER" id="PTHR43603:SF1">
    <property type="entry name" value="ZINC-REGULATED GTPASE METALLOPROTEIN ACTIVATOR 1"/>
    <property type="match status" value="1"/>
</dbReference>
<dbReference type="Pfam" id="PF02492">
    <property type="entry name" value="cobW"/>
    <property type="match status" value="1"/>
</dbReference>
<dbReference type="Pfam" id="PF07683">
    <property type="entry name" value="CobW_C"/>
    <property type="match status" value="1"/>
</dbReference>
<dbReference type="SMART" id="SM00833">
    <property type="entry name" value="CobW_C"/>
    <property type="match status" value="1"/>
</dbReference>
<dbReference type="SUPFAM" id="SSF52540">
    <property type="entry name" value="P-loop containing nucleoside triphosphate hydrolases"/>
    <property type="match status" value="1"/>
</dbReference>
<proteinExistence type="inferred from homology"/>
<reference key="1">
    <citation type="journal article" date="2002" name="Nature">
        <title>Sequence and analysis of chromosome 2 of Dictyostelium discoideum.</title>
        <authorList>
            <person name="Gloeckner G."/>
            <person name="Eichinger L."/>
            <person name="Szafranski K."/>
            <person name="Pachebat J.A."/>
            <person name="Bankier A.T."/>
            <person name="Dear P.H."/>
            <person name="Lehmann R."/>
            <person name="Baumgart C."/>
            <person name="Parra G."/>
            <person name="Abril J.F."/>
            <person name="Guigo R."/>
            <person name="Kumpf K."/>
            <person name="Tunggal B."/>
            <person name="Cox E.C."/>
            <person name="Quail M.A."/>
            <person name="Platzer M."/>
            <person name="Rosenthal A."/>
            <person name="Noegel A.A."/>
        </authorList>
    </citation>
    <scope>NUCLEOTIDE SEQUENCE [LARGE SCALE GENOMIC DNA]</scope>
    <source>
        <strain>AX4</strain>
    </source>
</reference>
<reference key="2">
    <citation type="journal article" date="2005" name="Nature">
        <title>The genome of the social amoeba Dictyostelium discoideum.</title>
        <authorList>
            <person name="Eichinger L."/>
            <person name="Pachebat J.A."/>
            <person name="Gloeckner G."/>
            <person name="Rajandream M.A."/>
            <person name="Sucgang R."/>
            <person name="Berriman M."/>
            <person name="Song J."/>
            <person name="Olsen R."/>
            <person name="Szafranski K."/>
            <person name="Xu Q."/>
            <person name="Tunggal B."/>
            <person name="Kummerfeld S."/>
            <person name="Madera M."/>
            <person name="Konfortov B.A."/>
            <person name="Rivero F."/>
            <person name="Bankier A.T."/>
            <person name="Lehmann R."/>
            <person name="Hamlin N."/>
            <person name="Davies R."/>
            <person name="Gaudet P."/>
            <person name="Fey P."/>
            <person name="Pilcher K."/>
            <person name="Chen G."/>
            <person name="Saunders D."/>
            <person name="Sodergren E.J."/>
            <person name="Davis P."/>
            <person name="Kerhornou A."/>
            <person name="Nie X."/>
            <person name="Hall N."/>
            <person name="Anjard C."/>
            <person name="Hemphill L."/>
            <person name="Bason N."/>
            <person name="Farbrother P."/>
            <person name="Desany B."/>
            <person name="Just E."/>
            <person name="Morio T."/>
            <person name="Rost R."/>
            <person name="Churcher C.M."/>
            <person name="Cooper J."/>
            <person name="Haydock S."/>
            <person name="van Driessche N."/>
            <person name="Cronin A."/>
            <person name="Goodhead I."/>
            <person name="Muzny D.M."/>
            <person name="Mourier T."/>
            <person name="Pain A."/>
            <person name="Lu M."/>
            <person name="Harper D."/>
            <person name="Lindsay R."/>
            <person name="Hauser H."/>
            <person name="James K.D."/>
            <person name="Quiles M."/>
            <person name="Madan Babu M."/>
            <person name="Saito T."/>
            <person name="Buchrieser C."/>
            <person name="Wardroper A."/>
            <person name="Felder M."/>
            <person name="Thangavelu M."/>
            <person name="Johnson D."/>
            <person name="Knights A."/>
            <person name="Loulseged H."/>
            <person name="Mungall K.L."/>
            <person name="Oliver K."/>
            <person name="Price C."/>
            <person name="Quail M.A."/>
            <person name="Urushihara H."/>
            <person name="Hernandez J."/>
            <person name="Rabbinowitsch E."/>
            <person name="Steffen D."/>
            <person name="Sanders M."/>
            <person name="Ma J."/>
            <person name="Kohara Y."/>
            <person name="Sharp S."/>
            <person name="Simmonds M.N."/>
            <person name="Spiegler S."/>
            <person name="Tivey A."/>
            <person name="Sugano S."/>
            <person name="White B."/>
            <person name="Walker D."/>
            <person name="Woodward J.R."/>
            <person name="Winckler T."/>
            <person name="Tanaka Y."/>
            <person name="Shaulsky G."/>
            <person name="Schleicher M."/>
            <person name="Weinstock G.M."/>
            <person name="Rosenthal A."/>
            <person name="Cox E.C."/>
            <person name="Chisholm R.L."/>
            <person name="Gibbs R.A."/>
            <person name="Loomis W.F."/>
            <person name="Platzer M."/>
            <person name="Kay R.R."/>
            <person name="Williams J.G."/>
            <person name="Dear P.H."/>
            <person name="Noegel A.A."/>
            <person name="Barrell B.G."/>
            <person name="Kuspa A."/>
        </authorList>
    </citation>
    <scope>NUCLEOTIDE SEQUENCE [LARGE SCALE GENOMIC DNA]</scope>
    <source>
        <strain>AX4</strain>
    </source>
</reference>
<protein>
    <recommendedName>
        <fullName>Zinc-regulated GTPase metalloprotein activator 1</fullName>
        <ecNumber evidence="1">3.6.5.-</ecNumber>
    </recommendedName>
</protein>
<sequence length="475" mass="54301">MVNKTSTNNNKEPRRMKKHYLKSNASNLKKTLHKIKVRGFEKLPVSVLSGFLGSGKTTLLNYILNSNHGLKIAVIVNDMSEVNIDSKLILENEFKITRTKATEKQVEAVVEMSNGCICCTMREDLLVEVTKLAKEKRFDYLIIESSGISEPLPIAETFTFEIDGSIENLKDYTKLDTMVTVVDCSTWLEQYQSGESLKDKDMQATDQDERSLVDLLLDQVEFSNVILLNKCDLVSEERVKTIEGLIKHINPEARLLRSTNSVVPLKEILNTGLFDFKKASEHPGWLKELRGTHVPETIEYGIKSFIYKARRPFNSERLSNVIEKGSAVFGGVLRSKGFSWIASTPELIGMWNLAGVQMTILNYGYWLADLKPHEYPNLDLQKEIKKNWSEPFGDRRQELVFIGGNTMNQSLIESELNNCLLTDAELLLGKDIWRTWIDPIQLDEELEEEELEEEEEEGEYKDEIEMKVDGSKFKK</sequence>
<organism>
    <name type="scientific">Dictyostelium discoideum</name>
    <name type="common">Social amoeba</name>
    <dbReference type="NCBI Taxonomy" id="44689"/>
    <lineage>
        <taxon>Eukaryota</taxon>
        <taxon>Amoebozoa</taxon>
        <taxon>Evosea</taxon>
        <taxon>Eumycetozoa</taxon>
        <taxon>Dictyostelia</taxon>
        <taxon>Dictyosteliales</taxon>
        <taxon>Dictyosteliaceae</taxon>
        <taxon>Dictyostelium</taxon>
    </lineage>
</organism>
<evidence type="ECO:0000250" key="1">
    <source>
        <dbReference type="UniProtKB" id="Q8VEH6"/>
    </source>
</evidence>
<evidence type="ECO:0000255" key="2"/>
<evidence type="ECO:0000256" key="3">
    <source>
        <dbReference type="SAM" id="MobiDB-lite"/>
    </source>
</evidence>
<evidence type="ECO:0000305" key="4"/>